<feature type="chain" id="PRO_0000406443" description="Transcription activator of gluconeogenesis NCU03938">
    <location>
        <begin position="1"/>
        <end position="740"/>
    </location>
</feature>
<feature type="domain" description="PAS">
    <location>
        <begin position="475"/>
        <end position="546"/>
    </location>
</feature>
<feature type="DNA-binding region" description="Zn(2)-C6 fungal-type" evidence="2">
    <location>
        <begin position="75"/>
        <end position="103"/>
    </location>
</feature>
<feature type="region of interest" description="Disordered" evidence="3">
    <location>
        <begin position="1"/>
        <end position="66"/>
    </location>
</feature>
<feature type="region of interest" description="Disordered" evidence="3">
    <location>
        <begin position="333"/>
        <end position="405"/>
    </location>
</feature>
<feature type="region of interest" description="Disordered" evidence="3">
    <location>
        <begin position="532"/>
        <end position="579"/>
    </location>
</feature>
<feature type="region of interest" description="Disordered" evidence="3">
    <location>
        <begin position="639"/>
        <end position="674"/>
    </location>
</feature>
<feature type="compositionally biased region" description="Acidic residues" evidence="3">
    <location>
        <begin position="19"/>
        <end position="37"/>
    </location>
</feature>
<feature type="compositionally biased region" description="Basic and acidic residues" evidence="3">
    <location>
        <begin position="52"/>
        <end position="65"/>
    </location>
</feature>
<feature type="compositionally biased region" description="Polar residues" evidence="3">
    <location>
        <begin position="337"/>
        <end position="351"/>
    </location>
</feature>
<feature type="compositionally biased region" description="Low complexity" evidence="3">
    <location>
        <begin position="639"/>
        <end position="658"/>
    </location>
</feature>
<comment type="function">
    <text evidence="1">Transcription factor which regulates nonfermentable carbon utilization. Activator of gluconeogenetic genes (By similarity).</text>
</comment>
<comment type="subcellular location">
    <subcellularLocation>
        <location evidence="2">Nucleus</location>
    </subcellularLocation>
</comment>
<comment type="similarity">
    <text evidence="4">Belongs to the ERT1/acuK family.</text>
</comment>
<reference key="1">
    <citation type="journal article" date="2003" name="Nucleic Acids Res.">
        <title>What's in the genome of a filamentous fungus? Analysis of the Neurospora genome sequence.</title>
        <authorList>
            <person name="Mannhaupt G."/>
            <person name="Montrone C."/>
            <person name="Haase D."/>
            <person name="Mewes H.-W."/>
            <person name="Aign V."/>
            <person name="Hoheisel J.D."/>
            <person name="Fartmann B."/>
            <person name="Nyakatura G."/>
            <person name="Kempken F."/>
            <person name="Maier J."/>
            <person name="Schulte U."/>
        </authorList>
    </citation>
    <scope>NUCLEOTIDE SEQUENCE [LARGE SCALE GENOMIC DNA]</scope>
    <source>
        <strain>ATCC 24698 / 74-OR23-1A / CBS 708.71 / DSM 1257 / FGSC 987</strain>
    </source>
</reference>
<reference key="2">
    <citation type="journal article" date="2003" name="Nature">
        <title>The genome sequence of the filamentous fungus Neurospora crassa.</title>
        <authorList>
            <person name="Galagan J.E."/>
            <person name="Calvo S.E."/>
            <person name="Borkovich K.A."/>
            <person name="Selker E.U."/>
            <person name="Read N.D."/>
            <person name="Jaffe D.B."/>
            <person name="FitzHugh W."/>
            <person name="Ma L.-J."/>
            <person name="Smirnov S."/>
            <person name="Purcell S."/>
            <person name="Rehman B."/>
            <person name="Elkins T."/>
            <person name="Engels R."/>
            <person name="Wang S."/>
            <person name="Nielsen C.B."/>
            <person name="Butler J."/>
            <person name="Endrizzi M."/>
            <person name="Qui D."/>
            <person name="Ianakiev P."/>
            <person name="Bell-Pedersen D."/>
            <person name="Nelson M.A."/>
            <person name="Werner-Washburne M."/>
            <person name="Selitrennikoff C.P."/>
            <person name="Kinsey J.A."/>
            <person name="Braun E.L."/>
            <person name="Zelter A."/>
            <person name="Schulte U."/>
            <person name="Kothe G.O."/>
            <person name="Jedd G."/>
            <person name="Mewes H.-W."/>
            <person name="Staben C."/>
            <person name="Marcotte E."/>
            <person name="Greenberg D."/>
            <person name="Roy A."/>
            <person name="Foley K."/>
            <person name="Naylor J."/>
            <person name="Stange-Thomann N."/>
            <person name="Barrett R."/>
            <person name="Gnerre S."/>
            <person name="Kamal M."/>
            <person name="Kamvysselis M."/>
            <person name="Mauceli E.W."/>
            <person name="Bielke C."/>
            <person name="Rudd S."/>
            <person name="Frishman D."/>
            <person name="Krystofova S."/>
            <person name="Rasmussen C."/>
            <person name="Metzenberg R.L."/>
            <person name="Perkins D.D."/>
            <person name="Kroken S."/>
            <person name="Cogoni C."/>
            <person name="Macino G."/>
            <person name="Catcheside D.E.A."/>
            <person name="Li W."/>
            <person name="Pratt R.J."/>
            <person name="Osmani S.A."/>
            <person name="DeSouza C.P.C."/>
            <person name="Glass N.L."/>
            <person name="Orbach M.J."/>
            <person name="Berglund J.A."/>
            <person name="Voelker R."/>
            <person name="Yarden O."/>
            <person name="Plamann M."/>
            <person name="Seiler S."/>
            <person name="Dunlap J.C."/>
            <person name="Radford A."/>
            <person name="Aramayo R."/>
            <person name="Natvig D.O."/>
            <person name="Alex L.A."/>
            <person name="Mannhaupt G."/>
            <person name="Ebbole D.J."/>
            <person name="Freitag M."/>
            <person name="Paulsen I."/>
            <person name="Sachs M.S."/>
            <person name="Lander E.S."/>
            <person name="Nusbaum C."/>
            <person name="Birren B.W."/>
        </authorList>
    </citation>
    <scope>NUCLEOTIDE SEQUENCE [LARGE SCALE GENOMIC DNA]</scope>
    <source>
        <strain>ATCC 24698 / 74-OR23-1A / CBS 708.71 / DSM 1257 / FGSC 987</strain>
    </source>
</reference>
<proteinExistence type="inferred from homology"/>
<protein>
    <recommendedName>
        <fullName>Transcription activator of gluconeogenesis NCU03938</fullName>
    </recommendedName>
</protein>
<accession>Q7RUA4</accession>
<accession>Q6M901</accession>
<sequence>MPDDVGPAEAEVSGAVSESDNEYDETEVTTKDDDDEKMAERSVASEGVETNGDQKKKYDPKDPLRPRRKKARRACYACQRAHLTCGDERPCQRCIKRGLAEACQDGVRKKAKYLHDAPPEALRPVLGPNYNPAAAVSVRNGHRHPSNAGSDAGSSIGTFYSQSTQYPVFSSAATQLGSIPENLPFPQQSPVSPTFQPSSNPQLGSIGVSSVSSPMNSFPPALFDPSNPAIFNFNLEGLNFGSQYGAMEFGMLGHMSSGAAETPPRDPSMAQQGTSDVGFNPSGVFGNGLNQFEKVYDNNTGLISDFLTLDAHSNGLYSQGNLQHGLPHAYAIPAGPTSLQSPSTENNSPQPTGFGFESPTATNYTGVPGAAGNQPGSQQPRAQKPKTPALGKLGPQSVLGKRQRDPSSIYEAVKEPFQYVASFHKLISLLQNRFSGASTISIVRSLASIRPSFMSCMKTLNRADLIFMEKSFQRALFEHEEFMHQSPSPAIACRRTGEIAAVNKEFTALTGWTKDVLLGKTLNLNANMGGTNSDTLSISSKGGRGGIVGTTPRLKPLHPEQGTNADSQQQQSQQHKEQPQPVFLAELMDEASVTQFYEDYAQLAFTHSRGTVVRKCRLLKYRTQENMDAAAAAAAAASAPTASGGSGSSNGTVVNGGPDSSPAGKTEKERPTGVNVASNSILSNRVAKIDGEHGISKLERDGKLECSYTWTIKRDVFDIPMIIMINFLPCYYRSHNQLAV</sequence>
<evidence type="ECO:0000250" key="1"/>
<evidence type="ECO:0000255" key="2">
    <source>
        <dbReference type="PROSITE-ProRule" id="PRU00227"/>
    </source>
</evidence>
<evidence type="ECO:0000256" key="3">
    <source>
        <dbReference type="SAM" id="MobiDB-lite"/>
    </source>
</evidence>
<evidence type="ECO:0000305" key="4"/>
<gene>
    <name type="ORF">G17A4.270</name>
    <name type="ORF">NCU03938</name>
</gene>
<name>ACUK_NEUCR</name>
<keyword id="KW-0010">Activator</keyword>
<keyword id="KW-0238">DNA-binding</keyword>
<keyword id="KW-0312">Gluconeogenesis</keyword>
<keyword id="KW-0479">Metal-binding</keyword>
<keyword id="KW-0539">Nucleus</keyword>
<keyword id="KW-1185">Reference proteome</keyword>
<keyword id="KW-0804">Transcription</keyword>
<keyword id="KW-0805">Transcription regulation</keyword>
<keyword id="KW-0862">Zinc</keyword>
<dbReference type="EMBL" id="BX908812">
    <property type="protein sequence ID" value="CAF06162.1"/>
    <property type="molecule type" value="Genomic_DNA"/>
</dbReference>
<dbReference type="EMBL" id="CM002241">
    <property type="protein sequence ID" value="EAA28341.2"/>
    <property type="molecule type" value="Genomic_DNA"/>
</dbReference>
<dbReference type="SMR" id="Q7RUA4"/>
<dbReference type="FunCoup" id="Q7RUA4">
    <property type="interactions" value="193"/>
</dbReference>
<dbReference type="STRING" id="367110.Q7RUA4"/>
<dbReference type="PaxDb" id="5141-EFNCRP00000003593"/>
<dbReference type="EnsemblFungi" id="EAA28341">
    <property type="protein sequence ID" value="EAA28341"/>
    <property type="gene ID" value="NCU03938"/>
</dbReference>
<dbReference type="KEGG" id="ncr:NCU03938"/>
<dbReference type="VEuPathDB" id="FungiDB:NCU03938"/>
<dbReference type="HOGENOM" id="CLU_010748_1_0_1"/>
<dbReference type="InParanoid" id="Q7RUA4"/>
<dbReference type="OMA" id="VMTTCKL"/>
<dbReference type="OrthoDB" id="2538135at2759"/>
<dbReference type="Proteomes" id="UP000001805">
    <property type="component" value="Chromosome 5, Linkage Group VI"/>
</dbReference>
<dbReference type="GO" id="GO:0005634">
    <property type="term" value="C:nucleus"/>
    <property type="evidence" value="ECO:0000318"/>
    <property type="project" value="GO_Central"/>
</dbReference>
<dbReference type="GO" id="GO:0003700">
    <property type="term" value="F:DNA-binding transcription factor activity"/>
    <property type="evidence" value="ECO:0000318"/>
    <property type="project" value="GO_Central"/>
</dbReference>
<dbReference type="GO" id="GO:0000981">
    <property type="term" value="F:DNA-binding transcription factor activity, RNA polymerase II-specific"/>
    <property type="evidence" value="ECO:0007669"/>
    <property type="project" value="InterPro"/>
</dbReference>
<dbReference type="GO" id="GO:0000977">
    <property type="term" value="F:RNA polymerase II transcription regulatory region sequence-specific DNA binding"/>
    <property type="evidence" value="ECO:0000318"/>
    <property type="project" value="GO_Central"/>
</dbReference>
<dbReference type="GO" id="GO:0008270">
    <property type="term" value="F:zinc ion binding"/>
    <property type="evidence" value="ECO:0007669"/>
    <property type="project" value="InterPro"/>
</dbReference>
<dbReference type="GO" id="GO:0009267">
    <property type="term" value="P:cellular response to starvation"/>
    <property type="evidence" value="ECO:0000318"/>
    <property type="project" value="GO_Central"/>
</dbReference>
<dbReference type="GO" id="GO:0006094">
    <property type="term" value="P:gluconeogenesis"/>
    <property type="evidence" value="ECO:0007669"/>
    <property type="project" value="UniProtKB-KW"/>
</dbReference>
<dbReference type="CDD" id="cd00067">
    <property type="entry name" value="GAL4"/>
    <property type="match status" value="1"/>
</dbReference>
<dbReference type="InterPro" id="IPR050335">
    <property type="entry name" value="ERT1_acuK_gluconeogen_tf"/>
</dbReference>
<dbReference type="InterPro" id="IPR056751">
    <property type="entry name" value="PAS_13"/>
</dbReference>
<dbReference type="InterPro" id="IPR036864">
    <property type="entry name" value="Zn2-C6_fun-type_DNA-bd_sf"/>
</dbReference>
<dbReference type="InterPro" id="IPR001138">
    <property type="entry name" value="Zn2Cys6_DnaBD"/>
</dbReference>
<dbReference type="PANTHER" id="PTHR47659:SF1">
    <property type="entry name" value="TRANSCRIPTION ACTIVATOR OF GLUCONEOGENESIS ERT1"/>
    <property type="match status" value="1"/>
</dbReference>
<dbReference type="PANTHER" id="PTHR47659">
    <property type="entry name" value="ZN(II)2CYS6 TRANSCRIPTION FACTOR (EUROFUNG)-RELATED"/>
    <property type="match status" value="1"/>
</dbReference>
<dbReference type="Pfam" id="PF24990">
    <property type="entry name" value="PAS_13"/>
    <property type="match status" value="1"/>
</dbReference>
<dbReference type="SMART" id="SM00066">
    <property type="entry name" value="GAL4"/>
    <property type="match status" value="1"/>
</dbReference>
<dbReference type="SUPFAM" id="SSF57701">
    <property type="entry name" value="Zn2/Cys6 DNA-binding domain"/>
    <property type="match status" value="1"/>
</dbReference>
<dbReference type="PROSITE" id="PS50048">
    <property type="entry name" value="ZN2_CY6_FUNGAL_2"/>
    <property type="match status" value="1"/>
</dbReference>
<organism>
    <name type="scientific">Neurospora crassa (strain ATCC 24698 / 74-OR23-1A / CBS 708.71 / DSM 1257 / FGSC 987)</name>
    <dbReference type="NCBI Taxonomy" id="367110"/>
    <lineage>
        <taxon>Eukaryota</taxon>
        <taxon>Fungi</taxon>
        <taxon>Dikarya</taxon>
        <taxon>Ascomycota</taxon>
        <taxon>Pezizomycotina</taxon>
        <taxon>Sordariomycetes</taxon>
        <taxon>Sordariomycetidae</taxon>
        <taxon>Sordariales</taxon>
        <taxon>Sordariaceae</taxon>
        <taxon>Neurospora</taxon>
    </lineage>
</organism>